<keyword id="KW-0056">Arginine metabolism</keyword>
<keyword id="KW-0067">ATP-binding</keyword>
<keyword id="KW-0963">Cytoplasm</keyword>
<keyword id="KW-0418">Kinase</keyword>
<keyword id="KW-0547">Nucleotide-binding</keyword>
<keyword id="KW-0808">Transferase</keyword>
<dbReference type="EC" id="2.7.2.2"/>
<dbReference type="EMBL" id="BA000033">
    <property type="protein sequence ID" value="BAB96418.1"/>
    <property type="status" value="ALT_INIT"/>
    <property type="molecule type" value="Genomic_DNA"/>
</dbReference>
<dbReference type="SMR" id="P63556"/>
<dbReference type="KEGG" id="sam:MW2553"/>
<dbReference type="HOGENOM" id="CLU_076278_0_0_9"/>
<dbReference type="UniPathway" id="UPA00996">
    <property type="reaction ID" value="UER00366"/>
</dbReference>
<dbReference type="GO" id="GO:0005829">
    <property type="term" value="C:cytosol"/>
    <property type="evidence" value="ECO:0007669"/>
    <property type="project" value="TreeGrafter"/>
</dbReference>
<dbReference type="GO" id="GO:0005524">
    <property type="term" value="F:ATP binding"/>
    <property type="evidence" value="ECO:0007669"/>
    <property type="project" value="UniProtKB-KW"/>
</dbReference>
<dbReference type="GO" id="GO:0008804">
    <property type="term" value="F:carbamate kinase activity"/>
    <property type="evidence" value="ECO:0007669"/>
    <property type="project" value="UniProtKB-EC"/>
</dbReference>
<dbReference type="GO" id="GO:0019546">
    <property type="term" value="P:arginine deiminase pathway"/>
    <property type="evidence" value="ECO:0007669"/>
    <property type="project" value="TreeGrafter"/>
</dbReference>
<dbReference type="CDD" id="cd04235">
    <property type="entry name" value="AAK_CK"/>
    <property type="match status" value="1"/>
</dbReference>
<dbReference type="FunFam" id="3.40.1160.10:FF:000007">
    <property type="entry name" value="Carbamate kinase"/>
    <property type="match status" value="1"/>
</dbReference>
<dbReference type="Gene3D" id="3.40.1160.10">
    <property type="entry name" value="Acetylglutamate kinase-like"/>
    <property type="match status" value="1"/>
</dbReference>
<dbReference type="InterPro" id="IPR036393">
    <property type="entry name" value="AceGlu_kinase-like_sf"/>
</dbReference>
<dbReference type="InterPro" id="IPR001048">
    <property type="entry name" value="Asp/Glu/Uridylate_kinase"/>
</dbReference>
<dbReference type="InterPro" id="IPR003964">
    <property type="entry name" value="Carb_kinase"/>
</dbReference>
<dbReference type="NCBIfam" id="TIGR00746">
    <property type="entry name" value="arcC"/>
    <property type="match status" value="1"/>
</dbReference>
<dbReference type="NCBIfam" id="NF009007">
    <property type="entry name" value="PRK12352.1"/>
    <property type="match status" value="1"/>
</dbReference>
<dbReference type="PANTHER" id="PTHR30409">
    <property type="entry name" value="CARBAMATE KINASE"/>
    <property type="match status" value="1"/>
</dbReference>
<dbReference type="PANTHER" id="PTHR30409:SF1">
    <property type="entry name" value="CARBAMATE KINASE-RELATED"/>
    <property type="match status" value="1"/>
</dbReference>
<dbReference type="Pfam" id="PF00696">
    <property type="entry name" value="AA_kinase"/>
    <property type="match status" value="1"/>
</dbReference>
<dbReference type="PIRSF" id="PIRSF000723">
    <property type="entry name" value="Carbamate_kin"/>
    <property type="match status" value="1"/>
</dbReference>
<dbReference type="PRINTS" id="PR01469">
    <property type="entry name" value="CARBMTKINASE"/>
</dbReference>
<dbReference type="SUPFAM" id="SSF53633">
    <property type="entry name" value="Carbamate kinase-like"/>
    <property type="match status" value="1"/>
</dbReference>
<evidence type="ECO:0000305" key="1"/>
<protein>
    <recommendedName>
        <fullName>Carbamate kinase 2</fullName>
        <ecNumber>2.7.2.2</ecNumber>
    </recommendedName>
</protein>
<feature type="chain" id="PRO_0000185137" description="Carbamate kinase 2">
    <location>
        <begin position="1"/>
        <end position="313"/>
    </location>
</feature>
<organism>
    <name type="scientific">Staphylococcus aureus (strain MW2)</name>
    <dbReference type="NCBI Taxonomy" id="196620"/>
    <lineage>
        <taxon>Bacteria</taxon>
        <taxon>Bacillati</taxon>
        <taxon>Bacillota</taxon>
        <taxon>Bacilli</taxon>
        <taxon>Bacillales</taxon>
        <taxon>Staphylococcaceae</taxon>
        <taxon>Staphylococcus</taxon>
    </lineage>
</organism>
<accession>P63556</accession>
<accession>Q99R05</accession>
<gene>
    <name type="primary">arcC2</name>
    <name type="ordered locus">MW2553</name>
</gene>
<name>ARCC2_STAAW</name>
<reference key="1">
    <citation type="journal article" date="2002" name="Lancet">
        <title>Genome and virulence determinants of high virulence community-acquired MRSA.</title>
        <authorList>
            <person name="Baba T."/>
            <person name="Takeuchi F."/>
            <person name="Kuroda M."/>
            <person name="Yuzawa H."/>
            <person name="Aoki K."/>
            <person name="Oguchi A."/>
            <person name="Nagai Y."/>
            <person name="Iwama N."/>
            <person name="Asano K."/>
            <person name="Naimi T."/>
            <person name="Kuroda H."/>
            <person name="Cui L."/>
            <person name="Yamamoto K."/>
            <person name="Hiramatsu K."/>
        </authorList>
    </citation>
    <scope>NUCLEOTIDE SEQUENCE [LARGE SCALE GENOMIC DNA]</scope>
    <source>
        <strain>MW2</strain>
    </source>
</reference>
<proteinExistence type="inferred from homology"/>
<comment type="catalytic activity">
    <reaction>
        <text>hydrogencarbonate + NH4(+) + ATP = carbamoyl phosphate + ADP + H2O + H(+)</text>
        <dbReference type="Rhea" id="RHEA:10152"/>
        <dbReference type="ChEBI" id="CHEBI:15377"/>
        <dbReference type="ChEBI" id="CHEBI:15378"/>
        <dbReference type="ChEBI" id="CHEBI:17544"/>
        <dbReference type="ChEBI" id="CHEBI:28938"/>
        <dbReference type="ChEBI" id="CHEBI:30616"/>
        <dbReference type="ChEBI" id="CHEBI:58228"/>
        <dbReference type="ChEBI" id="CHEBI:456216"/>
        <dbReference type="EC" id="2.7.2.2"/>
    </reaction>
</comment>
<comment type="pathway">
    <text>Metabolic intermediate metabolism; carbamoyl phosphate degradation; CO(2) and NH(3) from carbamoyl phosphate: step 1/1.</text>
</comment>
<comment type="subcellular location">
    <subcellularLocation>
        <location evidence="1">Cytoplasm</location>
    </subcellularLocation>
</comment>
<comment type="similarity">
    <text evidence="1">Belongs to the carbamate kinase family.</text>
</comment>
<comment type="sequence caution" evidence="1">
    <conflict type="erroneous initiation">
        <sequence resource="EMBL-CDS" id="BAB96418"/>
    </conflict>
</comment>
<sequence>MKEKIVIALGGNAIQTKEATAEAQQTAIRRAMQNLKPLFDSPARIVISHGNGPQIGSLLIQQAKSNSDTTPAMPLDTCGAMSQGMIGYWLETEINRILTEMNSDRTVGTIVTRVEVDKDDPRFNNPTKPIGPFYTKEEVEELQKEQPDSVFKEDAGRGYRKVVASPLPQSILEHQLIRTLADGKNIVIACGGGGIPVIKKENTYEGVEAVIDKDFASEKLATLIEADTLMILTNVENVFINFNEPNQQQIDDIDVATLKKYAAQGKFAEGSMLPKIEAAIRFVESGENKKVIITNLEQAYEALIGNKGTHIHM</sequence>